<organism>
    <name type="scientific">Pseudechis porphyriacus</name>
    <name type="common">Red-bellied black snake</name>
    <dbReference type="NCBI Taxonomy" id="8671"/>
    <lineage>
        <taxon>Eukaryota</taxon>
        <taxon>Metazoa</taxon>
        <taxon>Chordata</taxon>
        <taxon>Craniata</taxon>
        <taxon>Vertebrata</taxon>
        <taxon>Euteleostomi</taxon>
        <taxon>Lepidosauria</taxon>
        <taxon>Squamata</taxon>
        <taxon>Bifurcata</taxon>
        <taxon>Unidentata</taxon>
        <taxon>Episquamata</taxon>
        <taxon>Toxicofera</taxon>
        <taxon>Serpentes</taxon>
        <taxon>Colubroidea</taxon>
        <taxon>Elapidae</taxon>
        <taxon>Hydrophiinae</taxon>
        <taxon>Pseudechis</taxon>
    </lineage>
</organism>
<name>WAPD_PSEPO</name>
<keyword id="KW-0044">Antibiotic</keyword>
<keyword id="KW-0929">Antimicrobial</keyword>
<keyword id="KW-1015">Disulfide bond</keyword>
<keyword id="KW-0964">Secreted</keyword>
<keyword id="KW-0732">Signal</keyword>
<evidence type="ECO:0000250" key="1">
    <source>
        <dbReference type="UniProtKB" id="P83952"/>
    </source>
</evidence>
<evidence type="ECO:0000255" key="2"/>
<evidence type="ECO:0000255" key="3">
    <source>
        <dbReference type="PROSITE-ProRule" id="PRU00722"/>
    </source>
</evidence>
<evidence type="ECO:0000303" key="4">
    <source>
    </source>
</evidence>
<evidence type="ECO:0000305" key="5"/>
<evidence type="ECO:0000305" key="6">
    <source>
    </source>
</evidence>
<comment type="function">
    <text evidence="1">Damages membranes of susceptible bacteria. Has no hemolytic activity. Not toxic to mice. Does not inhibit the proteinases elastase and cathepsin G.</text>
</comment>
<comment type="subcellular location">
    <subcellularLocation>
        <location evidence="6">Secreted</location>
    </subcellularLocation>
</comment>
<comment type="tissue specificity">
    <text evidence="6">Expressed by the venom gland.</text>
</comment>
<comment type="similarity">
    <text evidence="5">Belongs to the venom waprin family.</text>
</comment>
<protein>
    <recommendedName>
        <fullName evidence="4">Porwaprin-d</fullName>
    </recommendedName>
</protein>
<dbReference type="EMBL" id="EU401822">
    <property type="protein sequence ID" value="ACC77771.1"/>
    <property type="molecule type" value="Genomic_DNA"/>
</dbReference>
<dbReference type="SMR" id="B5L5N4"/>
<dbReference type="GO" id="GO:0005576">
    <property type="term" value="C:extracellular region"/>
    <property type="evidence" value="ECO:0000250"/>
    <property type="project" value="UniProtKB"/>
</dbReference>
<dbReference type="GO" id="GO:0005615">
    <property type="term" value="C:extracellular space"/>
    <property type="evidence" value="ECO:0007669"/>
    <property type="project" value="TreeGrafter"/>
</dbReference>
<dbReference type="GO" id="GO:0004867">
    <property type="term" value="F:serine-type endopeptidase inhibitor activity"/>
    <property type="evidence" value="ECO:0007669"/>
    <property type="project" value="TreeGrafter"/>
</dbReference>
<dbReference type="GO" id="GO:0019731">
    <property type="term" value="P:antibacterial humoral response"/>
    <property type="evidence" value="ECO:0007669"/>
    <property type="project" value="TreeGrafter"/>
</dbReference>
<dbReference type="GO" id="GO:0045087">
    <property type="term" value="P:innate immune response"/>
    <property type="evidence" value="ECO:0007669"/>
    <property type="project" value="TreeGrafter"/>
</dbReference>
<dbReference type="GO" id="GO:0044278">
    <property type="term" value="P:venom-mediated disruption of cell wall in another organism"/>
    <property type="evidence" value="ECO:0000250"/>
    <property type="project" value="UniProtKB"/>
</dbReference>
<dbReference type="Gene3D" id="4.10.75.10">
    <property type="entry name" value="Elafin-like"/>
    <property type="match status" value="1"/>
</dbReference>
<dbReference type="InterPro" id="IPR036645">
    <property type="entry name" value="Elafin-like_sf"/>
</dbReference>
<dbReference type="InterPro" id="IPR008197">
    <property type="entry name" value="WAP_dom"/>
</dbReference>
<dbReference type="InterPro" id="IPR050514">
    <property type="entry name" value="WAP_four-disulfide_core"/>
</dbReference>
<dbReference type="PANTHER" id="PTHR19441:SF44">
    <property type="entry name" value="ANTILEUKOPROTEINASE"/>
    <property type="match status" value="1"/>
</dbReference>
<dbReference type="PANTHER" id="PTHR19441">
    <property type="entry name" value="WHEY ACDIC PROTEIN WAP"/>
    <property type="match status" value="1"/>
</dbReference>
<dbReference type="Pfam" id="PF00095">
    <property type="entry name" value="WAP"/>
    <property type="match status" value="1"/>
</dbReference>
<dbReference type="PRINTS" id="PR00003">
    <property type="entry name" value="4DISULPHCORE"/>
</dbReference>
<dbReference type="SMART" id="SM00217">
    <property type="entry name" value="WAP"/>
    <property type="match status" value="1"/>
</dbReference>
<dbReference type="SUPFAM" id="SSF57256">
    <property type="entry name" value="Elafin-like"/>
    <property type="match status" value="1"/>
</dbReference>
<dbReference type="PROSITE" id="PS51390">
    <property type="entry name" value="WAP"/>
    <property type="match status" value="1"/>
</dbReference>
<feature type="signal peptide" evidence="2">
    <location>
        <begin position="1"/>
        <end position="24"/>
    </location>
</feature>
<feature type="chain" id="PRO_5000395622" description="Porwaprin-d">
    <location>
        <begin position="25"/>
        <end position="75"/>
    </location>
</feature>
<feature type="domain" description="WAP" evidence="3">
    <location>
        <begin position="27"/>
        <end position="72"/>
    </location>
</feature>
<feature type="disulfide bond" evidence="3">
    <location>
        <begin position="34"/>
        <end position="60"/>
    </location>
</feature>
<feature type="disulfide bond" evidence="3">
    <location>
        <begin position="43"/>
        <end position="64"/>
    </location>
</feature>
<feature type="disulfide bond" evidence="3">
    <location>
        <begin position="47"/>
        <end position="59"/>
    </location>
</feature>
<feature type="disulfide bond" evidence="3">
    <location>
        <begin position="53"/>
        <end position="68"/>
    </location>
</feature>
<sequence>MSSGGLLLLLGLLTLWAELTPVSSLDRPKKPGLCPPRPQKPPCVRECKNDWRCPGEQKCCRYGCIYECRDPIFVK</sequence>
<accession>B5L5N4</accession>
<proteinExistence type="inferred from homology"/>
<reference key="1">
    <citation type="journal article" date="2008" name="Cell. Mol. Life Sci.">
        <title>Common evolution of waprin and Kunitz-like toxin families in Australian venomous snakes.</title>
        <authorList>
            <person name="St Pierre L."/>
            <person name="Earl S.T."/>
            <person name="Filippovich I."/>
            <person name="Sorokina N."/>
            <person name="Masci P.P."/>
            <person name="De Jersey J."/>
            <person name="Lavin M.F."/>
        </authorList>
    </citation>
    <scope>NUCLEOTIDE SEQUENCE [GENOMIC DNA]</scope>
    <source>
        <tissue>Venom gland</tissue>
    </source>
</reference>